<dbReference type="EMBL" id="CP000411">
    <property type="protein sequence ID" value="ABJ56771.1"/>
    <property type="molecule type" value="Genomic_DNA"/>
</dbReference>
<dbReference type="RefSeq" id="WP_002816455.1">
    <property type="nucleotide sequence ID" value="NC_008528.1"/>
</dbReference>
<dbReference type="SMR" id="Q04FK1"/>
<dbReference type="STRING" id="203123.OEOE_0850"/>
<dbReference type="GeneID" id="75066071"/>
<dbReference type="KEGG" id="ooe:OEOE_0850"/>
<dbReference type="eggNOG" id="COG1970">
    <property type="taxonomic scope" value="Bacteria"/>
</dbReference>
<dbReference type="HOGENOM" id="CLU_095787_0_0_9"/>
<dbReference type="Proteomes" id="UP000000774">
    <property type="component" value="Chromosome"/>
</dbReference>
<dbReference type="GO" id="GO:0005886">
    <property type="term" value="C:plasma membrane"/>
    <property type="evidence" value="ECO:0007669"/>
    <property type="project" value="UniProtKB-SubCell"/>
</dbReference>
<dbReference type="GO" id="GO:0008381">
    <property type="term" value="F:mechanosensitive monoatomic ion channel activity"/>
    <property type="evidence" value="ECO:0007669"/>
    <property type="project" value="UniProtKB-UniRule"/>
</dbReference>
<dbReference type="Gene3D" id="1.10.1200.120">
    <property type="entry name" value="Large-conductance mechanosensitive channel, MscL, domain 1"/>
    <property type="match status" value="1"/>
</dbReference>
<dbReference type="HAMAP" id="MF_00115">
    <property type="entry name" value="MscL"/>
    <property type="match status" value="1"/>
</dbReference>
<dbReference type="InterPro" id="IPR001185">
    <property type="entry name" value="MS_channel"/>
</dbReference>
<dbReference type="InterPro" id="IPR037673">
    <property type="entry name" value="MSC/AndL"/>
</dbReference>
<dbReference type="InterPro" id="IPR036019">
    <property type="entry name" value="MscL_channel"/>
</dbReference>
<dbReference type="NCBIfam" id="TIGR00220">
    <property type="entry name" value="mscL"/>
    <property type="match status" value="1"/>
</dbReference>
<dbReference type="NCBIfam" id="NF001842">
    <property type="entry name" value="PRK00567.1-3"/>
    <property type="match status" value="1"/>
</dbReference>
<dbReference type="PANTHER" id="PTHR30266:SF2">
    <property type="entry name" value="LARGE-CONDUCTANCE MECHANOSENSITIVE CHANNEL"/>
    <property type="match status" value="1"/>
</dbReference>
<dbReference type="PANTHER" id="PTHR30266">
    <property type="entry name" value="MECHANOSENSITIVE CHANNEL MSCL"/>
    <property type="match status" value="1"/>
</dbReference>
<dbReference type="Pfam" id="PF01741">
    <property type="entry name" value="MscL"/>
    <property type="match status" value="1"/>
</dbReference>
<dbReference type="PRINTS" id="PR01264">
    <property type="entry name" value="MECHCHANNEL"/>
</dbReference>
<dbReference type="SUPFAM" id="SSF81330">
    <property type="entry name" value="Gated mechanosensitive channel"/>
    <property type="match status" value="1"/>
</dbReference>
<feature type="chain" id="PRO_1000015403" description="Large-conductance mechanosensitive channel">
    <location>
        <begin position="1"/>
        <end position="129"/>
    </location>
</feature>
<feature type="transmembrane region" description="Helical" evidence="1">
    <location>
        <begin position="8"/>
        <end position="28"/>
    </location>
</feature>
<feature type="transmembrane region" description="Helical" evidence="1">
    <location>
        <begin position="30"/>
        <end position="50"/>
    </location>
</feature>
<feature type="transmembrane region" description="Helical" evidence="1">
    <location>
        <begin position="67"/>
        <end position="87"/>
    </location>
</feature>
<organism>
    <name type="scientific">Oenococcus oeni (strain ATCC BAA-331 / PSU-1)</name>
    <dbReference type="NCBI Taxonomy" id="203123"/>
    <lineage>
        <taxon>Bacteria</taxon>
        <taxon>Bacillati</taxon>
        <taxon>Bacillota</taxon>
        <taxon>Bacilli</taxon>
        <taxon>Lactobacillales</taxon>
        <taxon>Lactobacillaceae</taxon>
        <taxon>Oenococcus</taxon>
    </lineage>
</organism>
<keyword id="KW-1003">Cell membrane</keyword>
<keyword id="KW-0407">Ion channel</keyword>
<keyword id="KW-0406">Ion transport</keyword>
<keyword id="KW-0472">Membrane</keyword>
<keyword id="KW-1185">Reference proteome</keyword>
<keyword id="KW-0812">Transmembrane</keyword>
<keyword id="KW-1133">Transmembrane helix</keyword>
<keyword id="KW-0813">Transport</keyword>
<comment type="function">
    <text evidence="1">Channel that opens in response to stretch forces in the membrane lipid bilayer. May participate in the regulation of osmotic pressure changes within the cell.</text>
</comment>
<comment type="subunit">
    <text evidence="1">Homopentamer.</text>
</comment>
<comment type="subcellular location">
    <subcellularLocation>
        <location evidence="1">Cell membrane</location>
        <topology evidence="1">Multi-pass membrane protein</topology>
    </subcellularLocation>
</comment>
<comment type="similarity">
    <text evidence="1">Belongs to the MscL family.</text>
</comment>
<evidence type="ECO:0000255" key="1">
    <source>
        <dbReference type="HAMAP-Rule" id="MF_00115"/>
    </source>
</evidence>
<gene>
    <name evidence="1" type="primary">mscL</name>
    <name type="ordered locus">OEOE_0850</name>
</gene>
<protein>
    <recommendedName>
        <fullName evidence="1">Large-conductance mechanosensitive channel</fullName>
    </recommendedName>
</protein>
<sequence length="129" mass="14068">MLNEFKQFIMRGNAIDLAVGVVMGAAFTSIVKSIVTNLIGPIIGIFAGAVDLSSLKFSIGPAVFKYGAVLNQVINFIIVGFIIFLIIKAINKFFKKNEKKEDAEAESEVKLLTDIRAELKKSNQSTNKA</sequence>
<proteinExistence type="inferred from homology"/>
<name>MSCL_OENOB</name>
<reference key="1">
    <citation type="journal article" date="2006" name="Proc. Natl. Acad. Sci. U.S.A.">
        <title>Comparative genomics of the lactic acid bacteria.</title>
        <authorList>
            <person name="Makarova K.S."/>
            <person name="Slesarev A."/>
            <person name="Wolf Y.I."/>
            <person name="Sorokin A."/>
            <person name="Mirkin B."/>
            <person name="Koonin E.V."/>
            <person name="Pavlov A."/>
            <person name="Pavlova N."/>
            <person name="Karamychev V."/>
            <person name="Polouchine N."/>
            <person name="Shakhova V."/>
            <person name="Grigoriev I."/>
            <person name="Lou Y."/>
            <person name="Rohksar D."/>
            <person name="Lucas S."/>
            <person name="Huang K."/>
            <person name="Goodstein D.M."/>
            <person name="Hawkins T."/>
            <person name="Plengvidhya V."/>
            <person name="Welker D."/>
            <person name="Hughes J."/>
            <person name="Goh Y."/>
            <person name="Benson A."/>
            <person name="Baldwin K."/>
            <person name="Lee J.-H."/>
            <person name="Diaz-Muniz I."/>
            <person name="Dosti B."/>
            <person name="Smeianov V."/>
            <person name="Wechter W."/>
            <person name="Barabote R."/>
            <person name="Lorca G."/>
            <person name="Altermann E."/>
            <person name="Barrangou R."/>
            <person name="Ganesan B."/>
            <person name="Xie Y."/>
            <person name="Rawsthorne H."/>
            <person name="Tamir D."/>
            <person name="Parker C."/>
            <person name="Breidt F."/>
            <person name="Broadbent J.R."/>
            <person name="Hutkins R."/>
            <person name="O'Sullivan D."/>
            <person name="Steele J."/>
            <person name="Unlu G."/>
            <person name="Saier M.H. Jr."/>
            <person name="Klaenhammer T."/>
            <person name="Richardson P."/>
            <person name="Kozyavkin S."/>
            <person name="Weimer B.C."/>
            <person name="Mills D.A."/>
        </authorList>
    </citation>
    <scope>NUCLEOTIDE SEQUENCE [LARGE SCALE GENOMIC DNA]</scope>
    <source>
        <strain>ATCC BAA-331 / PSU-1</strain>
    </source>
</reference>
<accession>Q04FK1</accession>